<comment type="function">
    <text>Ligand of the EGF receptor/EGFR. Autocrine growth factor as well as a mitogen for a broad range of target cells including astrocytes, Schwann cells and fibroblasts.</text>
</comment>
<comment type="subunit">
    <text evidence="1">The immature precursor interacts with CNIH.</text>
</comment>
<comment type="subcellular location">
    <subcellularLocation>
        <location>Membrane</location>
        <topology>Single-pass membrane protein</topology>
    </subcellularLocation>
</comment>
<comment type="similarity">
    <text evidence="5">Belongs to the amphiregulin family.</text>
</comment>
<organism>
    <name type="scientific">Rattus norvegicus</name>
    <name type="common">Rat</name>
    <dbReference type="NCBI Taxonomy" id="10116"/>
    <lineage>
        <taxon>Eukaryota</taxon>
        <taxon>Metazoa</taxon>
        <taxon>Chordata</taxon>
        <taxon>Craniata</taxon>
        <taxon>Vertebrata</taxon>
        <taxon>Euteleostomi</taxon>
        <taxon>Mammalia</taxon>
        <taxon>Eutheria</taxon>
        <taxon>Euarchontoglires</taxon>
        <taxon>Glires</taxon>
        <taxon>Rodentia</taxon>
        <taxon>Myomorpha</taxon>
        <taxon>Muroidea</taxon>
        <taxon>Muridae</taxon>
        <taxon>Murinae</taxon>
        <taxon>Rattus</taxon>
    </lineage>
</organism>
<gene>
    <name type="primary">Areg</name>
    <name type="synonym">Sdgf</name>
</gene>
<protein>
    <recommendedName>
        <fullName>Amphiregulin</fullName>
        <shortName>AR</shortName>
    </recommendedName>
    <alternativeName>
        <fullName>Schwannoma-derived growth factor</fullName>
        <shortName>SDGF</shortName>
    </alternativeName>
</protein>
<dbReference type="EMBL" id="X55183">
    <property type="protein sequence ID" value="CAA38967.1"/>
    <property type="molecule type" value="mRNA"/>
</dbReference>
<dbReference type="PIR" id="S13296">
    <property type="entry name" value="S13296"/>
</dbReference>
<dbReference type="RefSeq" id="NP_058819.1">
    <property type="nucleotide sequence ID" value="NM_017123.2"/>
</dbReference>
<dbReference type="SMR" id="P24338"/>
<dbReference type="FunCoup" id="P24338">
    <property type="interactions" value="598"/>
</dbReference>
<dbReference type="STRING" id="10116.ENSRNOP00000003703"/>
<dbReference type="GlyCosmos" id="P24338">
    <property type="glycosylation" value="3 sites, No reported glycans"/>
</dbReference>
<dbReference type="GlyGen" id="P24338">
    <property type="glycosylation" value="3 sites"/>
</dbReference>
<dbReference type="PhosphoSitePlus" id="P24338"/>
<dbReference type="PaxDb" id="10116-ENSRNOP00000003703"/>
<dbReference type="Ensembl" id="ENSRNOT00000003703.5">
    <property type="protein sequence ID" value="ENSRNOP00000003703.2"/>
    <property type="gene ID" value="ENSRNOG00000002754.5"/>
</dbReference>
<dbReference type="GeneID" id="29183"/>
<dbReference type="KEGG" id="rno:29183"/>
<dbReference type="UCSC" id="RGD:2149">
    <property type="organism name" value="rat"/>
</dbReference>
<dbReference type="AGR" id="RGD:2149"/>
<dbReference type="CTD" id="374"/>
<dbReference type="RGD" id="2149">
    <property type="gene designation" value="Areg"/>
</dbReference>
<dbReference type="eggNOG" id="ENOG502S0KA">
    <property type="taxonomic scope" value="Eukaryota"/>
</dbReference>
<dbReference type="GeneTree" id="ENSGT00940000160696"/>
<dbReference type="HOGENOM" id="CLU_096527_1_0_1"/>
<dbReference type="InParanoid" id="P24338"/>
<dbReference type="OMA" id="CHHDYFG"/>
<dbReference type="OrthoDB" id="9909110at2759"/>
<dbReference type="PhylomeDB" id="P24338"/>
<dbReference type="TreeFam" id="TF332773"/>
<dbReference type="Reactome" id="R-RNO-1257604">
    <property type="pathway name" value="PIP3 activates AKT signaling"/>
</dbReference>
<dbReference type="Reactome" id="R-RNO-177929">
    <property type="pathway name" value="Signaling by EGFR"/>
</dbReference>
<dbReference type="Reactome" id="R-RNO-179812">
    <property type="pathway name" value="GRB2 events in EGFR signaling"/>
</dbReference>
<dbReference type="Reactome" id="R-RNO-180292">
    <property type="pathway name" value="GAB1 signalosome"/>
</dbReference>
<dbReference type="Reactome" id="R-RNO-180336">
    <property type="pathway name" value="SHC1 events in EGFR signaling"/>
</dbReference>
<dbReference type="Reactome" id="R-RNO-182971">
    <property type="pathway name" value="EGFR downregulation"/>
</dbReference>
<dbReference type="Reactome" id="R-RNO-204005">
    <property type="pathway name" value="COPII-mediated vesicle transport"/>
</dbReference>
<dbReference type="Reactome" id="R-RNO-212718">
    <property type="pathway name" value="EGFR interacts with phospholipase C-gamma"/>
</dbReference>
<dbReference type="Reactome" id="R-RNO-5673001">
    <property type="pathway name" value="RAF/MAP kinase cascade"/>
</dbReference>
<dbReference type="Reactome" id="R-RNO-5694530">
    <property type="pathway name" value="Cargo concentration in the ER"/>
</dbReference>
<dbReference type="Reactome" id="R-RNO-6811558">
    <property type="pathway name" value="PI5P, PP2A and IER3 Regulate PI3K/AKT Signaling"/>
</dbReference>
<dbReference type="Reactome" id="R-RNO-8856825">
    <property type="pathway name" value="Cargo recognition for clathrin-mediated endocytosis"/>
</dbReference>
<dbReference type="Reactome" id="R-RNO-8856828">
    <property type="pathway name" value="Clathrin-mediated endocytosis"/>
</dbReference>
<dbReference type="Reactome" id="R-RNO-9009391">
    <property type="pathway name" value="Extra-nuclear estrogen signaling"/>
</dbReference>
<dbReference type="PRO" id="PR:P24338"/>
<dbReference type="Proteomes" id="UP000002494">
    <property type="component" value="Chromosome 14"/>
</dbReference>
<dbReference type="Bgee" id="ENSRNOG00000002754">
    <property type="expression patterns" value="Expressed in duodenum and 10 other cell types or tissues"/>
</dbReference>
<dbReference type="GO" id="GO:0009986">
    <property type="term" value="C:cell surface"/>
    <property type="evidence" value="ECO:0000266"/>
    <property type="project" value="RGD"/>
</dbReference>
<dbReference type="GO" id="GO:0005737">
    <property type="term" value="C:cytoplasm"/>
    <property type="evidence" value="ECO:0000266"/>
    <property type="project" value="RGD"/>
</dbReference>
<dbReference type="GO" id="GO:0005615">
    <property type="term" value="C:extracellular space"/>
    <property type="evidence" value="ECO:0000314"/>
    <property type="project" value="RGD"/>
</dbReference>
<dbReference type="GO" id="GO:0016020">
    <property type="term" value="C:membrane"/>
    <property type="evidence" value="ECO:0007669"/>
    <property type="project" value="UniProtKB-SubCell"/>
</dbReference>
<dbReference type="GO" id="GO:0005634">
    <property type="term" value="C:nucleus"/>
    <property type="evidence" value="ECO:0000266"/>
    <property type="project" value="RGD"/>
</dbReference>
<dbReference type="GO" id="GO:0005125">
    <property type="term" value="F:cytokine activity"/>
    <property type="evidence" value="ECO:0007669"/>
    <property type="project" value="UniProtKB-KW"/>
</dbReference>
<dbReference type="GO" id="GO:0005154">
    <property type="term" value="F:epidermal growth factor receptor binding"/>
    <property type="evidence" value="ECO:0000314"/>
    <property type="project" value="RGD"/>
</dbReference>
<dbReference type="GO" id="GO:0008083">
    <property type="term" value="F:growth factor activity"/>
    <property type="evidence" value="ECO:0000314"/>
    <property type="project" value="RGD"/>
</dbReference>
<dbReference type="GO" id="GO:0048018">
    <property type="term" value="F:receptor ligand activity"/>
    <property type="evidence" value="ECO:0000266"/>
    <property type="project" value="RGD"/>
</dbReference>
<dbReference type="GO" id="GO:0030297">
    <property type="term" value="F:transmembrane receptor protein tyrosine kinase activator activity"/>
    <property type="evidence" value="ECO:0000266"/>
    <property type="project" value="RGD"/>
</dbReference>
<dbReference type="GO" id="GO:0060598">
    <property type="term" value="P:dichotomous subdivision of terminal units involved in mammary gland duct morphogenesis"/>
    <property type="evidence" value="ECO:0000266"/>
    <property type="project" value="RGD"/>
</dbReference>
<dbReference type="GO" id="GO:0007173">
    <property type="term" value="P:epidermal growth factor receptor signaling pathway"/>
    <property type="evidence" value="ECO:0000314"/>
    <property type="project" value="RGD"/>
</dbReference>
<dbReference type="GO" id="GO:0060750">
    <property type="term" value="P:epithelial cell proliferation involved in mammary gland duct elongation"/>
    <property type="evidence" value="ECO:0000266"/>
    <property type="project" value="RGD"/>
</dbReference>
<dbReference type="GO" id="GO:0038134">
    <property type="term" value="P:ERBB2-EGFR signaling pathway"/>
    <property type="evidence" value="ECO:0000266"/>
    <property type="project" value="RGD"/>
</dbReference>
<dbReference type="GO" id="GO:0007186">
    <property type="term" value="P:G protein-coupled receptor signaling pathway"/>
    <property type="evidence" value="ECO:0000266"/>
    <property type="project" value="RGD"/>
</dbReference>
<dbReference type="GO" id="GO:0014009">
    <property type="term" value="P:glial cell proliferation"/>
    <property type="evidence" value="ECO:0000314"/>
    <property type="project" value="RGD"/>
</dbReference>
<dbReference type="GO" id="GO:0060749">
    <property type="term" value="P:mammary gland alveolus development"/>
    <property type="evidence" value="ECO:0000266"/>
    <property type="project" value="RGD"/>
</dbReference>
<dbReference type="GO" id="GO:0060744">
    <property type="term" value="P:mammary gland branching involved in thelarche"/>
    <property type="evidence" value="ECO:0000266"/>
    <property type="project" value="RGD"/>
</dbReference>
<dbReference type="GO" id="GO:0045668">
    <property type="term" value="P:negative regulation of osteoblast differentiation"/>
    <property type="evidence" value="ECO:0000314"/>
    <property type="project" value="RGD"/>
</dbReference>
<dbReference type="GO" id="GO:0031175">
    <property type="term" value="P:neuron projection development"/>
    <property type="evidence" value="ECO:0000315"/>
    <property type="project" value="RGD"/>
</dbReference>
<dbReference type="GO" id="GO:0008284">
    <property type="term" value="P:positive regulation of cell population proliferation"/>
    <property type="evidence" value="ECO:0000314"/>
    <property type="project" value="RGD"/>
</dbReference>
<dbReference type="GO" id="GO:0042327">
    <property type="term" value="P:positive regulation of phosphorylation"/>
    <property type="evidence" value="ECO:0000314"/>
    <property type="project" value="RGD"/>
</dbReference>
<dbReference type="GO" id="GO:0051591">
    <property type="term" value="P:response to cAMP"/>
    <property type="evidence" value="ECO:0000270"/>
    <property type="project" value="RGD"/>
</dbReference>
<dbReference type="GO" id="GO:0032355">
    <property type="term" value="P:response to estradiol"/>
    <property type="evidence" value="ECO:0000266"/>
    <property type="project" value="RGD"/>
</dbReference>
<dbReference type="GO" id="GO:0051384">
    <property type="term" value="P:response to glucocorticoid"/>
    <property type="evidence" value="ECO:0000315"/>
    <property type="project" value="RGD"/>
</dbReference>
<dbReference type="GO" id="GO:0042542">
    <property type="term" value="P:response to hydrogen peroxide"/>
    <property type="evidence" value="ECO:0000270"/>
    <property type="project" value="RGD"/>
</dbReference>
<dbReference type="GO" id="GO:0043434">
    <property type="term" value="P:response to peptide hormone"/>
    <property type="evidence" value="ECO:0000270"/>
    <property type="project" value="RGD"/>
</dbReference>
<dbReference type="FunFam" id="2.10.25.10:FF:000158">
    <property type="entry name" value="proheparin-binding EGF-like growth factor"/>
    <property type="match status" value="1"/>
</dbReference>
<dbReference type="Gene3D" id="2.10.25.10">
    <property type="entry name" value="Laminin"/>
    <property type="match status" value="1"/>
</dbReference>
<dbReference type="InterPro" id="IPR000742">
    <property type="entry name" value="EGF-like_dom"/>
</dbReference>
<dbReference type="PANTHER" id="PTHR10740:SF12">
    <property type="entry name" value="AMPHIREGULIN"/>
    <property type="match status" value="1"/>
</dbReference>
<dbReference type="PANTHER" id="PTHR10740">
    <property type="entry name" value="TRANSFORMING GROWTH FACTOR ALPHA"/>
    <property type="match status" value="1"/>
</dbReference>
<dbReference type="SUPFAM" id="SSF57196">
    <property type="entry name" value="EGF/Laminin"/>
    <property type="match status" value="1"/>
</dbReference>
<dbReference type="PROSITE" id="PS00022">
    <property type="entry name" value="EGF_1"/>
    <property type="match status" value="1"/>
</dbReference>
<dbReference type="PROSITE" id="PS50026">
    <property type="entry name" value="EGF_3"/>
    <property type="match status" value="1"/>
</dbReference>
<accession>P24338</accession>
<sequence>MRTPSLSLALSVLSLLVLGSGHYAAGLELNGTSSGKGEPSSGDHSAGGLVVSEVSTISEMPSGSELSTGDYDYSEEYDNEPQISGYIVDDSVRVEQVIKPKENKTEGEKSSEKPKRKKKGGKGGKGRRNRKKKKNPCAAKFQNFCIHGECRYIENLEVVTCHCHQDYFGERCGEKTMKTQKKDDSDLSKIALAAIIVFVSAVSVAAIGIITAVLLRKRFFREYEEAEERRRLRQENGTAHAIA</sequence>
<reference key="1">
    <citation type="journal article" date="1990" name="Nature">
        <title>Structure, expression and function of a schwannoma-derived growth factor.</title>
        <authorList>
            <person name="Kimura H."/>
            <person name="Fischer W.H."/>
            <person name="Schubert D."/>
        </authorList>
    </citation>
    <scope>NUCLEOTIDE SEQUENCE [MRNA]</scope>
    <scope>PARTIAL PROTEIN SEQUENCE</scope>
</reference>
<feature type="signal peptide" evidence="2">
    <location>
        <begin position="1"/>
        <end position="24"/>
    </location>
</feature>
<feature type="propeptide" id="PRO_0000007478">
    <location>
        <begin position="25"/>
        <end position="96"/>
    </location>
</feature>
<feature type="chain" id="PRO_0000007479" description="Amphiregulin">
    <location>
        <begin position="97"/>
        <end position="243"/>
    </location>
</feature>
<feature type="transmembrane region" description="Helical" evidence="2">
    <location>
        <begin position="190"/>
        <end position="213"/>
    </location>
</feature>
<feature type="domain" description="EGF-like" evidence="3">
    <location>
        <begin position="133"/>
        <end position="173"/>
    </location>
</feature>
<feature type="region of interest" description="Disordered" evidence="4">
    <location>
        <begin position="55"/>
        <end position="75"/>
    </location>
</feature>
<feature type="region of interest" description="Disordered" evidence="4">
    <location>
        <begin position="98"/>
        <end position="135"/>
    </location>
</feature>
<feature type="compositionally biased region" description="Polar residues" evidence="4">
    <location>
        <begin position="55"/>
        <end position="67"/>
    </location>
</feature>
<feature type="compositionally biased region" description="Basic and acidic residues" evidence="4">
    <location>
        <begin position="98"/>
        <end position="113"/>
    </location>
</feature>
<feature type="compositionally biased region" description="Basic residues" evidence="4">
    <location>
        <begin position="114"/>
        <end position="135"/>
    </location>
</feature>
<feature type="glycosylation site" description="N-linked (GlcNAc...) asparagine" evidence="2">
    <location>
        <position position="30"/>
    </location>
</feature>
<feature type="glycosylation site" description="N-linked (GlcNAc...) asparagine" evidence="2">
    <location>
        <position position="103"/>
    </location>
</feature>
<feature type="glycosylation site" description="N-linked (GlcNAc...) asparagine" evidence="2">
    <location>
        <position position="236"/>
    </location>
</feature>
<feature type="disulfide bond" evidence="3">
    <location>
        <begin position="137"/>
        <end position="150"/>
    </location>
</feature>
<feature type="disulfide bond" evidence="3">
    <location>
        <begin position="145"/>
        <end position="161"/>
    </location>
</feature>
<feature type="disulfide bond" evidence="3">
    <location>
        <begin position="163"/>
        <end position="172"/>
    </location>
</feature>
<name>AREG_RAT</name>
<proteinExistence type="evidence at protein level"/>
<keyword id="KW-0202">Cytokine</keyword>
<keyword id="KW-0903">Direct protein sequencing</keyword>
<keyword id="KW-1015">Disulfide bond</keyword>
<keyword id="KW-0245">EGF-like domain</keyword>
<keyword id="KW-0325">Glycoprotein</keyword>
<keyword id="KW-0339">Growth factor</keyword>
<keyword id="KW-0472">Membrane</keyword>
<keyword id="KW-1185">Reference proteome</keyword>
<keyword id="KW-0732">Signal</keyword>
<keyword id="KW-0812">Transmembrane</keyword>
<keyword id="KW-1133">Transmembrane helix</keyword>
<evidence type="ECO:0000250" key="1"/>
<evidence type="ECO:0000255" key="2"/>
<evidence type="ECO:0000255" key="3">
    <source>
        <dbReference type="PROSITE-ProRule" id="PRU00076"/>
    </source>
</evidence>
<evidence type="ECO:0000256" key="4">
    <source>
        <dbReference type="SAM" id="MobiDB-lite"/>
    </source>
</evidence>
<evidence type="ECO:0000305" key="5"/>